<proteinExistence type="inferred from homology"/>
<feature type="signal peptide" evidence="1">
    <location>
        <begin position="1"/>
        <end position="30"/>
    </location>
</feature>
<feature type="chain" id="PRO_5003315620" description="LEAF RUST 10 DISEASE-RESISTANCE LOCUS RECEPTOR-LIKE PROTEIN KINASE-like 2.2">
    <location>
        <begin position="31"/>
        <end position="624"/>
    </location>
</feature>
<feature type="topological domain" description="Extracellular" evidence="6">
    <location>
        <begin position="31"/>
        <end position="263"/>
    </location>
</feature>
<feature type="transmembrane region" description="Helical" evidence="1">
    <location>
        <begin position="264"/>
        <end position="284"/>
    </location>
</feature>
<feature type="topological domain" description="Cytoplasmic" evidence="6">
    <location>
        <begin position="285"/>
        <end position="624"/>
    </location>
</feature>
<feature type="domain" description="Protein kinase" evidence="2">
    <location>
        <begin position="317"/>
        <end position="599"/>
    </location>
</feature>
<feature type="region of interest" description="Disordered" evidence="4">
    <location>
        <begin position="587"/>
        <end position="624"/>
    </location>
</feature>
<feature type="compositionally biased region" description="Polar residues" evidence="4">
    <location>
        <begin position="603"/>
        <end position="624"/>
    </location>
</feature>
<feature type="active site" description="Proton acceptor" evidence="2">
    <location>
        <position position="434"/>
    </location>
</feature>
<feature type="binding site" evidence="2">
    <location>
        <begin position="323"/>
        <end position="331"/>
    </location>
    <ligand>
        <name>ATP</name>
        <dbReference type="ChEBI" id="CHEBI:30616"/>
    </ligand>
</feature>
<feature type="binding site" evidence="2">
    <location>
        <position position="345"/>
    </location>
    <ligand>
        <name>ATP</name>
        <dbReference type="ChEBI" id="CHEBI:30616"/>
    </ligand>
</feature>
<feature type="glycosylation site" description="N-linked (GlcNAc...) asparagine" evidence="3">
    <location>
        <position position="45"/>
    </location>
</feature>
<feature type="glycosylation site" description="N-linked (GlcNAc...) asparagine" evidence="3">
    <location>
        <position position="75"/>
    </location>
</feature>
<feature type="glycosylation site" description="N-linked (GlcNAc...) asparagine" evidence="3">
    <location>
        <position position="85"/>
    </location>
</feature>
<feature type="glycosylation site" description="N-linked (GlcNAc...) asparagine" evidence="3">
    <location>
        <position position="95"/>
    </location>
</feature>
<feature type="glycosylation site" description="N-linked (GlcNAc...) asparagine" evidence="3">
    <location>
        <position position="150"/>
    </location>
</feature>
<feature type="glycosylation site" description="N-linked (GlcNAc...) asparagine" evidence="3">
    <location>
        <position position="164"/>
    </location>
</feature>
<comment type="catalytic activity">
    <reaction>
        <text>L-seryl-[protein] + ATP = O-phospho-L-seryl-[protein] + ADP + H(+)</text>
        <dbReference type="Rhea" id="RHEA:17989"/>
        <dbReference type="Rhea" id="RHEA-COMP:9863"/>
        <dbReference type="Rhea" id="RHEA-COMP:11604"/>
        <dbReference type="ChEBI" id="CHEBI:15378"/>
        <dbReference type="ChEBI" id="CHEBI:29999"/>
        <dbReference type="ChEBI" id="CHEBI:30616"/>
        <dbReference type="ChEBI" id="CHEBI:83421"/>
        <dbReference type="ChEBI" id="CHEBI:456216"/>
        <dbReference type="EC" id="2.7.11.1"/>
    </reaction>
</comment>
<comment type="catalytic activity">
    <reaction>
        <text>L-threonyl-[protein] + ATP = O-phospho-L-threonyl-[protein] + ADP + H(+)</text>
        <dbReference type="Rhea" id="RHEA:46608"/>
        <dbReference type="Rhea" id="RHEA-COMP:11060"/>
        <dbReference type="Rhea" id="RHEA-COMP:11605"/>
        <dbReference type="ChEBI" id="CHEBI:15378"/>
        <dbReference type="ChEBI" id="CHEBI:30013"/>
        <dbReference type="ChEBI" id="CHEBI:30616"/>
        <dbReference type="ChEBI" id="CHEBI:61977"/>
        <dbReference type="ChEBI" id="CHEBI:456216"/>
        <dbReference type="EC" id="2.7.11.1"/>
    </reaction>
</comment>
<comment type="subcellular location">
    <subcellularLocation>
        <location evidence="1">Membrane</location>
        <topology evidence="6">Single-pass type I membrane protein</topology>
    </subcellularLocation>
</comment>
<comment type="similarity">
    <text evidence="2">Belongs to the protein kinase superfamily. Ser/Thr protein kinase family.</text>
</comment>
<comment type="sequence caution" evidence="6">
    <conflict type="erroneous gene model prediction">
        <sequence resource="EMBL-CDS" id="BAB11290"/>
    </conflict>
</comment>
<reference key="1">
    <citation type="journal article" date="1997" name="DNA Res.">
        <title>Structural analysis of Arabidopsis thaliana chromosome 5. I. Sequence features of the 1.6 Mb regions covered by twenty physically assigned P1 clones.</title>
        <authorList>
            <person name="Sato S."/>
            <person name="Kotani H."/>
            <person name="Nakamura Y."/>
            <person name="Kaneko T."/>
            <person name="Asamizu E."/>
            <person name="Fukami M."/>
            <person name="Miyajima N."/>
            <person name="Tabata S."/>
        </authorList>
    </citation>
    <scope>NUCLEOTIDE SEQUENCE [LARGE SCALE GENOMIC DNA]</scope>
    <source>
        <strain>cv. Columbia</strain>
    </source>
</reference>
<reference key="2">
    <citation type="journal article" date="2017" name="Plant J.">
        <title>Araport11: a complete reannotation of the Arabidopsis thaliana reference genome.</title>
        <authorList>
            <person name="Cheng C.Y."/>
            <person name="Krishnakumar V."/>
            <person name="Chan A.P."/>
            <person name="Thibaud-Nissen F."/>
            <person name="Schobel S."/>
            <person name="Town C.D."/>
        </authorList>
    </citation>
    <scope>GENOME REANNOTATION</scope>
    <source>
        <strain>cv. Columbia</strain>
    </source>
</reference>
<reference key="3">
    <citation type="journal article" date="2001" name="Proc. Natl. Acad. Sci. U.S.A.">
        <title>Receptor-like kinases from Arabidopsis form a monophyletic gene family related to animal receptor kinases.</title>
        <authorList>
            <person name="Shiu S.H."/>
            <person name="Bleecker A.B."/>
        </authorList>
    </citation>
    <scope>GENE FAMILY</scope>
</reference>
<reference key="4">
    <citation type="journal article" date="2003" name="Plant Physiol.">
        <title>Expansion of the receptor-like kinase/Pelle gene family and receptor-like proteins in Arabidopsis.</title>
        <authorList>
            <person name="Shiu S.H."/>
            <person name="Bleecker A.B."/>
        </authorList>
    </citation>
    <scope>GENE FAMILY</scope>
</reference>
<gene>
    <name evidence="5" type="primary">LRK10L-2.2</name>
    <name evidence="7" type="ordered locus">At5g38240</name>
    <name evidence="8" type="ORF">MXA21.7</name>
</gene>
<organism>
    <name type="scientific">Arabidopsis thaliana</name>
    <name type="common">Mouse-ear cress</name>
    <dbReference type="NCBI Taxonomy" id="3702"/>
    <lineage>
        <taxon>Eukaryota</taxon>
        <taxon>Viridiplantae</taxon>
        <taxon>Streptophyta</taxon>
        <taxon>Embryophyta</taxon>
        <taxon>Tracheophyta</taxon>
        <taxon>Spermatophyta</taxon>
        <taxon>Magnoliopsida</taxon>
        <taxon>eudicotyledons</taxon>
        <taxon>Gunneridae</taxon>
        <taxon>Pentapetalae</taxon>
        <taxon>rosids</taxon>
        <taxon>malvids</taxon>
        <taxon>Brassicales</taxon>
        <taxon>Brassicaceae</taxon>
        <taxon>Camelineae</taxon>
        <taxon>Arabidopsis</taxon>
    </lineage>
</organism>
<name>LRL22_ARATH</name>
<accession>F4KA50</accession>
<accession>Q9FF33</accession>
<protein>
    <recommendedName>
        <fullName evidence="5">LEAF RUST 10 DISEASE-RESISTANCE LOCUS RECEPTOR-LIKE PROTEIN KINASE-like 2.2</fullName>
        <ecNumber>2.7.11.1</ecNumber>
    </recommendedName>
    <alternativeName>
        <fullName evidence="6">Probable receptor-like serine/threonine-protein kinase LRK10L-2.2</fullName>
    </alternativeName>
</protein>
<keyword id="KW-0067">ATP-binding</keyword>
<keyword id="KW-0325">Glycoprotein</keyword>
<keyword id="KW-0418">Kinase</keyword>
<keyword id="KW-0472">Membrane</keyword>
<keyword id="KW-0547">Nucleotide-binding</keyword>
<keyword id="KW-0675">Receptor</keyword>
<keyword id="KW-1185">Reference proteome</keyword>
<keyword id="KW-0723">Serine/threonine-protein kinase</keyword>
<keyword id="KW-0732">Signal</keyword>
<keyword id="KW-0808">Transferase</keyword>
<keyword id="KW-0812">Transmembrane</keyword>
<keyword id="KW-1133">Transmembrane helix</keyword>
<evidence type="ECO:0000255" key="1"/>
<evidence type="ECO:0000255" key="2">
    <source>
        <dbReference type="PROSITE-ProRule" id="PRU00159"/>
    </source>
</evidence>
<evidence type="ECO:0000255" key="3">
    <source>
        <dbReference type="PROSITE-ProRule" id="PRU00498"/>
    </source>
</evidence>
<evidence type="ECO:0000256" key="4">
    <source>
        <dbReference type="SAM" id="MobiDB-lite"/>
    </source>
</evidence>
<evidence type="ECO:0000303" key="5">
    <source>
    </source>
</evidence>
<evidence type="ECO:0000305" key="6"/>
<evidence type="ECO:0000312" key="7">
    <source>
        <dbReference type="Araport" id="AT5G38240"/>
    </source>
</evidence>
<evidence type="ECO:0000312" key="8">
    <source>
        <dbReference type="EMBL" id="BAB11290.1"/>
    </source>
</evidence>
<dbReference type="EC" id="2.7.11.1"/>
<dbReference type="EMBL" id="AB005247">
    <property type="protein sequence ID" value="BAB11290.1"/>
    <property type="status" value="ALT_SEQ"/>
    <property type="molecule type" value="Genomic_DNA"/>
</dbReference>
<dbReference type="EMBL" id="CP002688">
    <property type="protein sequence ID" value="ANM70965.1"/>
    <property type="molecule type" value="Genomic_DNA"/>
</dbReference>
<dbReference type="RefSeq" id="NP_001332532.1">
    <property type="nucleotide sequence ID" value="NM_001344236.1"/>
</dbReference>
<dbReference type="SMR" id="F4KA50"/>
<dbReference type="FunCoup" id="F4KA50">
    <property type="interactions" value="16"/>
</dbReference>
<dbReference type="STRING" id="3702.F4KA50"/>
<dbReference type="GlyCosmos" id="F4KA50">
    <property type="glycosylation" value="6 sites, No reported glycans"/>
</dbReference>
<dbReference type="GlyGen" id="F4KA50">
    <property type="glycosylation" value="6 sites"/>
</dbReference>
<dbReference type="ProteomicsDB" id="238573"/>
<dbReference type="EnsemblPlants" id="AT5G38240.2">
    <property type="protein sequence ID" value="AT5G38240.2"/>
    <property type="gene ID" value="AT5G38240"/>
</dbReference>
<dbReference type="GeneID" id="833806"/>
<dbReference type="Gramene" id="AT5G38240.2">
    <property type="protein sequence ID" value="AT5G38240.2"/>
    <property type="gene ID" value="AT5G38240"/>
</dbReference>
<dbReference type="KEGG" id="ath:AT5G38240"/>
<dbReference type="Araport" id="AT5G38240"/>
<dbReference type="TAIR" id="AT5G38240"/>
<dbReference type="eggNOG" id="KOG1187">
    <property type="taxonomic scope" value="Eukaryota"/>
</dbReference>
<dbReference type="HOGENOM" id="CLU_000288_115_3_1"/>
<dbReference type="InParanoid" id="F4KA50"/>
<dbReference type="OMA" id="MSNCEDF"/>
<dbReference type="PRO" id="PR:F4KA50"/>
<dbReference type="Proteomes" id="UP000006548">
    <property type="component" value="Chromosome 5"/>
</dbReference>
<dbReference type="ExpressionAtlas" id="F4KA50">
    <property type="expression patterns" value="baseline and differential"/>
</dbReference>
<dbReference type="GO" id="GO:0016020">
    <property type="term" value="C:membrane"/>
    <property type="evidence" value="ECO:0007669"/>
    <property type="project" value="UniProtKB-SubCell"/>
</dbReference>
<dbReference type="GO" id="GO:0005524">
    <property type="term" value="F:ATP binding"/>
    <property type="evidence" value="ECO:0007669"/>
    <property type="project" value="UniProtKB-KW"/>
</dbReference>
<dbReference type="GO" id="GO:0030247">
    <property type="term" value="F:polysaccharide binding"/>
    <property type="evidence" value="ECO:0007669"/>
    <property type="project" value="InterPro"/>
</dbReference>
<dbReference type="GO" id="GO:0106310">
    <property type="term" value="F:protein serine kinase activity"/>
    <property type="evidence" value="ECO:0007669"/>
    <property type="project" value="RHEA"/>
</dbReference>
<dbReference type="GO" id="GO:0004674">
    <property type="term" value="F:protein serine/threonine kinase activity"/>
    <property type="evidence" value="ECO:0007669"/>
    <property type="project" value="UniProtKB-KW"/>
</dbReference>
<dbReference type="FunFam" id="1.10.510.10:FF:000590">
    <property type="entry name" value="PR5-like receptor kinase"/>
    <property type="match status" value="1"/>
</dbReference>
<dbReference type="FunFam" id="3.30.200.20:FF:000644">
    <property type="entry name" value="Suppressor of npr1-1 constitutive 4"/>
    <property type="match status" value="1"/>
</dbReference>
<dbReference type="Gene3D" id="3.30.200.20">
    <property type="entry name" value="Phosphorylase Kinase, domain 1"/>
    <property type="match status" value="1"/>
</dbReference>
<dbReference type="Gene3D" id="1.10.510.10">
    <property type="entry name" value="Transferase(Phosphotransferase) domain 1"/>
    <property type="match status" value="1"/>
</dbReference>
<dbReference type="InterPro" id="IPR011009">
    <property type="entry name" value="Kinase-like_dom_sf"/>
</dbReference>
<dbReference type="InterPro" id="IPR045874">
    <property type="entry name" value="LRK10/LRL21-25-like"/>
</dbReference>
<dbReference type="InterPro" id="IPR000719">
    <property type="entry name" value="Prot_kinase_dom"/>
</dbReference>
<dbReference type="InterPro" id="IPR017441">
    <property type="entry name" value="Protein_kinase_ATP_BS"/>
</dbReference>
<dbReference type="InterPro" id="IPR001245">
    <property type="entry name" value="Ser-Thr/Tyr_kinase_cat_dom"/>
</dbReference>
<dbReference type="InterPro" id="IPR008271">
    <property type="entry name" value="Ser/Thr_kinase_AS"/>
</dbReference>
<dbReference type="InterPro" id="IPR025287">
    <property type="entry name" value="WAK_GUB"/>
</dbReference>
<dbReference type="PANTHER" id="PTHR27009">
    <property type="entry name" value="RUST RESISTANCE KINASE LR10-RELATED"/>
    <property type="match status" value="1"/>
</dbReference>
<dbReference type="Pfam" id="PF13947">
    <property type="entry name" value="GUB_WAK_bind"/>
    <property type="match status" value="1"/>
</dbReference>
<dbReference type="Pfam" id="PF07714">
    <property type="entry name" value="PK_Tyr_Ser-Thr"/>
    <property type="match status" value="1"/>
</dbReference>
<dbReference type="SMART" id="SM00220">
    <property type="entry name" value="S_TKc"/>
    <property type="match status" value="1"/>
</dbReference>
<dbReference type="SUPFAM" id="SSF56112">
    <property type="entry name" value="Protein kinase-like (PK-like)"/>
    <property type="match status" value="1"/>
</dbReference>
<dbReference type="PROSITE" id="PS00107">
    <property type="entry name" value="PROTEIN_KINASE_ATP"/>
    <property type="match status" value="1"/>
</dbReference>
<dbReference type="PROSITE" id="PS50011">
    <property type="entry name" value="PROTEIN_KINASE_DOM"/>
    <property type="match status" value="1"/>
</dbReference>
<dbReference type="PROSITE" id="PS00108">
    <property type="entry name" value="PROTEIN_KINASE_ST"/>
    <property type="match status" value="1"/>
</dbReference>
<sequence length="624" mass="69565">MDYLSSMGSQTARFCLILLFLFYYLPCALSQDDLWGCGTPFRCGNITAGFPFLGGIRGEVCGHHSLKLNCNKHSNTTSLIFSGHNYTVLYIDNNNNSVTLGLSRQDFSGPFCSASFSSTLLSSGLFQNLPSYKSLTVFYACDPRRHFLGNFTCPVKGLGSIIQNSTYGILCDGSFSVPVPTSFVSEEEVLDLTHLESVLRKGFEVKLNIDEIPCPLECFSSRANCLFLAGSCCKYHDRTTTCGGDTGDLLREIIPNTRSILITIGQVVGFHVFIIVVMIIAFLFWRRKKVNDLRKQNLEALVTSRRYSYRQIKKITKSFTEVVGRGGFGTVYKGNLRDGRKVAVKILKDSNGNCEDFINEVASISQTSHVNIVSLLGFCFEKSKRAIVYEFLENGSLDQSSNLDVSTLYGIALGVARGIEYLHFGCKKRIVHFDIKPQNVLLDENLKPKVADFGLAKLCEKQESILSLLDTRGTIGYIAPELFSRVYGNVSHKSDVYSYGMLVLEMTGARNKERVQNADSNNSSAYFPDWIFKDLENGDYVKLLADGLTREEEDIAKKMILVGLWCIQFRPSDRPSMNKVVGMMEGNLDSLDPPPKPLLHMPMQNNNAESSQPSEEDSSIYSEV</sequence>